<name>NUDC_HUMAN</name>
<accession>Q9Y266</accession>
<accession>Q5QP31</accession>
<accession>Q5QP35</accession>
<accession>Q9H0N2</accession>
<accession>Q9Y2B6</accession>
<dbReference type="EMBL" id="AF130736">
    <property type="protein sequence ID" value="AAD30517.1"/>
    <property type="molecule type" value="mRNA"/>
</dbReference>
<dbReference type="EMBL" id="AF125465">
    <property type="protein sequence ID" value="AAD39921.1"/>
    <property type="molecule type" value="mRNA"/>
</dbReference>
<dbReference type="EMBL" id="AF100760">
    <property type="protein sequence ID" value="AAD43024.1"/>
    <property type="molecule type" value="mRNA"/>
</dbReference>
<dbReference type="EMBL" id="AB019408">
    <property type="protein sequence ID" value="BAA76628.1"/>
    <property type="status" value="ALT_FRAME"/>
    <property type="molecule type" value="mRNA"/>
</dbReference>
<dbReference type="EMBL" id="AF086922">
    <property type="protein sequence ID" value="AAP97152.1"/>
    <property type="molecule type" value="mRNA"/>
</dbReference>
<dbReference type="EMBL" id="AL136725">
    <property type="protein sequence ID" value="CAB66659.1"/>
    <property type="molecule type" value="mRNA"/>
</dbReference>
<dbReference type="EMBL" id="AL356390">
    <property type="status" value="NOT_ANNOTATED_CDS"/>
    <property type="molecule type" value="Genomic_DNA"/>
</dbReference>
<dbReference type="EMBL" id="BC002399">
    <property type="protein sequence ID" value="AAH02399.1"/>
    <property type="molecule type" value="mRNA"/>
</dbReference>
<dbReference type="EMBL" id="BC003132">
    <property type="protein sequence ID" value="AAH03132.1"/>
    <property type="molecule type" value="mRNA"/>
</dbReference>
<dbReference type="EMBL" id="BC006147">
    <property type="protein sequence ID" value="AAH06147.1"/>
    <property type="molecule type" value="mRNA"/>
</dbReference>
<dbReference type="EMBL" id="BC007280">
    <property type="protein sequence ID" value="AAH07280.1"/>
    <property type="molecule type" value="mRNA"/>
</dbReference>
<dbReference type="EMBL" id="BC015153">
    <property type="protein sequence ID" value="AAH15153.1"/>
    <property type="molecule type" value="mRNA"/>
</dbReference>
<dbReference type="EMBL" id="BC021139">
    <property type="protein sequence ID" value="AAH21139.1"/>
    <property type="molecule type" value="mRNA"/>
</dbReference>
<dbReference type="CCDS" id="CCDS292.1"/>
<dbReference type="RefSeq" id="NP_006591.1">
    <property type="nucleotide sequence ID" value="NM_006600.4"/>
</dbReference>
<dbReference type="PDB" id="3QOR">
    <property type="method" value="X-ray"/>
    <property type="resolution" value="1.75 A"/>
    <property type="chains" value="A/B/C/D/E=158-274"/>
</dbReference>
<dbReference type="PDB" id="7NDX">
    <property type="method" value="X-ray"/>
    <property type="resolution" value="2.54 A"/>
    <property type="chains" value="B=100-141"/>
</dbReference>
<dbReference type="PDBsum" id="3QOR"/>
<dbReference type="PDBsum" id="7NDX"/>
<dbReference type="SMR" id="Q9Y266"/>
<dbReference type="BioGRID" id="115950">
    <property type="interactions" value="340"/>
</dbReference>
<dbReference type="CORUM" id="Q9Y266"/>
<dbReference type="FunCoup" id="Q9Y266">
    <property type="interactions" value="2864"/>
</dbReference>
<dbReference type="IntAct" id="Q9Y266">
    <property type="interactions" value="157"/>
</dbReference>
<dbReference type="MINT" id="Q9Y266"/>
<dbReference type="STRING" id="9606.ENSP00000319664"/>
<dbReference type="DrugBank" id="DB12695">
    <property type="generic name" value="Phenethyl Isothiocyanate"/>
</dbReference>
<dbReference type="GlyGen" id="Q9Y266">
    <property type="glycosylation" value="1 site, 1 O-linked glycan (1 site)"/>
</dbReference>
<dbReference type="iPTMnet" id="Q9Y266"/>
<dbReference type="MetOSite" id="Q9Y266"/>
<dbReference type="PhosphoSitePlus" id="Q9Y266"/>
<dbReference type="SwissPalm" id="Q9Y266"/>
<dbReference type="BioMuta" id="NUDC"/>
<dbReference type="DMDM" id="62287138"/>
<dbReference type="jPOST" id="Q9Y266"/>
<dbReference type="MassIVE" id="Q9Y266"/>
<dbReference type="PaxDb" id="9606-ENSP00000319664"/>
<dbReference type="PeptideAtlas" id="Q9Y266"/>
<dbReference type="ProteomicsDB" id="85671"/>
<dbReference type="Pumba" id="Q9Y266"/>
<dbReference type="TopDownProteomics" id="Q9Y266"/>
<dbReference type="Antibodypedia" id="30707">
    <property type="antibodies" value="408 antibodies from 36 providers"/>
</dbReference>
<dbReference type="DNASU" id="10726"/>
<dbReference type="Ensembl" id="ENST00000321265.10">
    <property type="protein sequence ID" value="ENSP00000319664.5"/>
    <property type="gene ID" value="ENSG00000090273.14"/>
</dbReference>
<dbReference type="GeneID" id="10726"/>
<dbReference type="KEGG" id="hsa:10726"/>
<dbReference type="MANE-Select" id="ENST00000321265.10">
    <property type="protein sequence ID" value="ENSP00000319664.5"/>
    <property type="RefSeq nucleotide sequence ID" value="NM_006600.4"/>
    <property type="RefSeq protein sequence ID" value="NP_006591.1"/>
</dbReference>
<dbReference type="UCSC" id="uc001bng.3">
    <property type="organism name" value="human"/>
</dbReference>
<dbReference type="AGR" id="HGNC:8045"/>
<dbReference type="CTD" id="10726"/>
<dbReference type="DisGeNET" id="10726"/>
<dbReference type="GeneCards" id="NUDC"/>
<dbReference type="HGNC" id="HGNC:8045">
    <property type="gene designation" value="NUDC"/>
</dbReference>
<dbReference type="HPA" id="ENSG00000090273">
    <property type="expression patterns" value="Low tissue specificity"/>
</dbReference>
<dbReference type="MalaCards" id="NUDC"/>
<dbReference type="MIM" id="610325">
    <property type="type" value="gene"/>
</dbReference>
<dbReference type="neXtProt" id="NX_Q9Y266"/>
<dbReference type="OpenTargets" id="ENSG00000090273"/>
<dbReference type="PharmGKB" id="PA31827"/>
<dbReference type="VEuPathDB" id="HostDB:ENSG00000090273"/>
<dbReference type="eggNOG" id="KOG2265">
    <property type="taxonomic scope" value="Eukaryota"/>
</dbReference>
<dbReference type="GeneTree" id="ENSGT00940000155361"/>
<dbReference type="HOGENOM" id="CLU_047332_1_0_1"/>
<dbReference type="InParanoid" id="Q9Y266"/>
<dbReference type="OMA" id="NQMEWWS"/>
<dbReference type="OrthoDB" id="416217at2759"/>
<dbReference type="PAN-GO" id="Q9Y266">
    <property type="GO annotations" value="3 GO annotations based on evolutionary models"/>
</dbReference>
<dbReference type="PhylomeDB" id="Q9Y266"/>
<dbReference type="TreeFam" id="TF300147"/>
<dbReference type="PathwayCommons" id="Q9Y266"/>
<dbReference type="Reactome" id="R-HSA-141444">
    <property type="pathway name" value="Amplification of signal from unattached kinetochores via a MAD2 inhibitory signal"/>
</dbReference>
<dbReference type="Reactome" id="R-HSA-2467813">
    <property type="pathway name" value="Separation of Sister Chromatids"/>
</dbReference>
<dbReference type="Reactome" id="R-HSA-2500257">
    <property type="pathway name" value="Resolution of Sister Chromatid Cohesion"/>
</dbReference>
<dbReference type="Reactome" id="R-HSA-5663220">
    <property type="pathway name" value="RHO GTPases Activate Formins"/>
</dbReference>
<dbReference type="Reactome" id="R-HSA-68877">
    <property type="pathway name" value="Mitotic Prometaphase"/>
</dbReference>
<dbReference type="Reactome" id="R-HSA-9648025">
    <property type="pathway name" value="EML4 and NUDC in mitotic spindle formation"/>
</dbReference>
<dbReference type="Reactome" id="R-HSA-9696270">
    <property type="pathway name" value="RND2 GTPase cycle"/>
</dbReference>
<dbReference type="SignaLink" id="Q9Y266"/>
<dbReference type="SIGNOR" id="Q9Y266"/>
<dbReference type="BioGRID-ORCS" id="10726">
    <property type="hits" value="689 hits in 1165 CRISPR screens"/>
</dbReference>
<dbReference type="CD-CODE" id="91857CE7">
    <property type="entry name" value="Nucleolus"/>
</dbReference>
<dbReference type="CD-CODE" id="DEE660B4">
    <property type="entry name" value="Stress granule"/>
</dbReference>
<dbReference type="ChiTaRS" id="NUDC">
    <property type="organism name" value="human"/>
</dbReference>
<dbReference type="EvolutionaryTrace" id="Q9Y266"/>
<dbReference type="GeneWiki" id="NUDC"/>
<dbReference type="GenomeRNAi" id="10726"/>
<dbReference type="Pharos" id="Q9Y266">
    <property type="development level" value="Tbio"/>
</dbReference>
<dbReference type="PRO" id="PR:Q9Y266"/>
<dbReference type="Proteomes" id="UP000005640">
    <property type="component" value="Chromosome 1"/>
</dbReference>
<dbReference type="RNAct" id="Q9Y266">
    <property type="molecule type" value="protein"/>
</dbReference>
<dbReference type="Bgee" id="ENSG00000090273">
    <property type="expression patterns" value="Expressed in tendon of biceps brachii and 208 other cell types or tissues"/>
</dbReference>
<dbReference type="ExpressionAtlas" id="Q9Y266">
    <property type="expression patterns" value="baseline and differential"/>
</dbReference>
<dbReference type="GO" id="GO:0005737">
    <property type="term" value="C:cytoplasm"/>
    <property type="evidence" value="ECO:0000314"/>
    <property type="project" value="LIFEdb"/>
</dbReference>
<dbReference type="GO" id="GO:0005829">
    <property type="term" value="C:cytosol"/>
    <property type="evidence" value="ECO:0000314"/>
    <property type="project" value="HPA"/>
</dbReference>
<dbReference type="GO" id="GO:0005874">
    <property type="term" value="C:microtubule"/>
    <property type="evidence" value="ECO:0007669"/>
    <property type="project" value="UniProtKB-KW"/>
</dbReference>
<dbReference type="GO" id="GO:0030496">
    <property type="term" value="C:midbody"/>
    <property type="evidence" value="ECO:0000314"/>
    <property type="project" value="UniProtKB"/>
</dbReference>
<dbReference type="GO" id="GO:0072686">
    <property type="term" value="C:mitotic spindle"/>
    <property type="evidence" value="ECO:0000314"/>
    <property type="project" value="UniProtKB"/>
</dbReference>
<dbReference type="GO" id="GO:0005654">
    <property type="term" value="C:nucleoplasm"/>
    <property type="evidence" value="ECO:0000304"/>
    <property type="project" value="Reactome"/>
</dbReference>
<dbReference type="GO" id="GO:0005819">
    <property type="term" value="C:spindle"/>
    <property type="evidence" value="ECO:0000304"/>
    <property type="project" value="Reactome"/>
</dbReference>
<dbReference type="GO" id="GO:0045296">
    <property type="term" value="F:cadherin binding"/>
    <property type="evidence" value="ECO:0007005"/>
    <property type="project" value="BHF-UCL"/>
</dbReference>
<dbReference type="GO" id="GO:0051082">
    <property type="term" value="F:unfolded protein binding"/>
    <property type="evidence" value="ECO:0000318"/>
    <property type="project" value="GO_Central"/>
</dbReference>
<dbReference type="GO" id="GO:0051301">
    <property type="term" value="P:cell division"/>
    <property type="evidence" value="ECO:0007669"/>
    <property type="project" value="UniProtKB-KW"/>
</dbReference>
<dbReference type="GO" id="GO:0007080">
    <property type="term" value="P:mitotic metaphase chromosome alignment"/>
    <property type="evidence" value="ECO:0000315"/>
    <property type="project" value="UniProtKB"/>
</dbReference>
<dbReference type="GO" id="GO:0007052">
    <property type="term" value="P:mitotic spindle organization"/>
    <property type="evidence" value="ECO:0000315"/>
    <property type="project" value="UniProtKB"/>
</dbReference>
<dbReference type="GO" id="GO:0007097">
    <property type="term" value="P:nuclear migration"/>
    <property type="evidence" value="ECO:0007669"/>
    <property type="project" value="Ensembl"/>
</dbReference>
<dbReference type="GO" id="GO:0006457">
    <property type="term" value="P:protein folding"/>
    <property type="evidence" value="ECO:0000318"/>
    <property type="project" value="GO_Central"/>
</dbReference>
<dbReference type="GO" id="GO:0043434">
    <property type="term" value="P:response to peptide hormone"/>
    <property type="evidence" value="ECO:0007669"/>
    <property type="project" value="Ensembl"/>
</dbReference>
<dbReference type="CDD" id="cd06492">
    <property type="entry name" value="p23_mNUDC_like"/>
    <property type="match status" value="1"/>
</dbReference>
<dbReference type="FunFam" id="2.60.40.790:FF:000001">
    <property type="entry name" value="Nuclear migration protein nudC"/>
    <property type="match status" value="1"/>
</dbReference>
<dbReference type="Gene3D" id="2.60.40.790">
    <property type="match status" value="1"/>
</dbReference>
<dbReference type="InterPro" id="IPR007052">
    <property type="entry name" value="CS_dom"/>
</dbReference>
<dbReference type="InterPro" id="IPR008978">
    <property type="entry name" value="HSP20-like_chaperone"/>
</dbReference>
<dbReference type="InterPro" id="IPR032572">
    <property type="entry name" value="NuDC"/>
</dbReference>
<dbReference type="InterPro" id="IPR037898">
    <property type="entry name" value="NudC_fam"/>
</dbReference>
<dbReference type="InterPro" id="IPR025934">
    <property type="entry name" value="NudC_N_dom"/>
</dbReference>
<dbReference type="PANTHER" id="PTHR12356:SF3">
    <property type="entry name" value="NUCLEAR MIGRATION PROTEIN NUDC"/>
    <property type="match status" value="1"/>
</dbReference>
<dbReference type="PANTHER" id="PTHR12356">
    <property type="entry name" value="NUCLEAR MOVEMENT PROTEIN NUDC"/>
    <property type="match status" value="1"/>
</dbReference>
<dbReference type="Pfam" id="PF04969">
    <property type="entry name" value="CS"/>
    <property type="match status" value="1"/>
</dbReference>
<dbReference type="Pfam" id="PF16273">
    <property type="entry name" value="NuDC"/>
    <property type="match status" value="1"/>
</dbReference>
<dbReference type="Pfam" id="PF14050">
    <property type="entry name" value="Nudc_N"/>
    <property type="match status" value="1"/>
</dbReference>
<dbReference type="SUPFAM" id="SSF49764">
    <property type="entry name" value="HSP20-like chaperones"/>
    <property type="match status" value="1"/>
</dbReference>
<dbReference type="PROSITE" id="PS51203">
    <property type="entry name" value="CS"/>
    <property type="match status" value="1"/>
</dbReference>
<comment type="function">
    <text evidence="1 7 8 11">Plays a role in neurogenesis and neuronal migration (By similarity). Necessary for correct formation of mitotic spindles and chromosome separation during mitosis (PubMed:12679384, PubMed:12852857, PubMed:25789526). Necessary for cytokinesis and cell proliferation (PubMed:12679384, PubMed:12852857).</text>
</comment>
<comment type="subunit">
    <text evidence="1 8 9 11">Interacts with PAFAH1B1 (By similarity). Interacts with PLK1 (PubMed:12852857). Part of a complex containing PLK1, NUDC, dynein and dynactin (PubMed:12852857). Interacts with DCDC1 (PubMed:22159412). Interacts with EML4 (via WD repeats) (PubMed:25789526).</text>
</comment>
<comment type="interaction">
    <interactant intactId="EBI-357298">
        <id>Q9Y266</id>
    </interactant>
    <interactant intactId="EBI-11954292">
        <id>Q86V38</id>
        <label>ATN1</label>
    </interactant>
    <organismsDiffer>false</organismsDiffer>
    <experiments>3</experiments>
</comment>
<comment type="interaction">
    <interactant intactId="EBI-357298">
        <id>Q9Y266</id>
    </interactant>
    <interactant intactId="EBI-6875961">
        <id>P02489</id>
        <label>CRYAA</label>
    </interactant>
    <organismsDiffer>false</organismsDiffer>
    <experiments>3</experiments>
</comment>
<comment type="interaction">
    <interactant intactId="EBI-357298">
        <id>Q9Y266</id>
    </interactant>
    <interactant intactId="EBI-352957">
        <id>O60884</id>
        <label>DNAJA2</label>
    </interactant>
    <organismsDiffer>false</organismsDiffer>
    <experiments>4</experiments>
</comment>
<comment type="interaction">
    <interactant intactId="EBI-357298">
        <id>Q9Y266</id>
    </interactant>
    <interactant intactId="EBI-2556085">
        <id>Q8WVS4</id>
        <label>DYNC2I1</label>
    </interactant>
    <organismsDiffer>false</organismsDiffer>
    <experiments>3</experiments>
</comment>
<comment type="interaction">
    <interactant intactId="EBI-357298">
        <id>Q9Y266</id>
    </interactant>
    <interactant intactId="EBI-751327">
        <id>O00423</id>
        <label>EML1</label>
    </interactant>
    <organismsDiffer>false</organismsDiffer>
    <experiments>2</experiments>
</comment>
<comment type="interaction">
    <interactant intactId="EBI-357298">
        <id>Q9Y266</id>
    </interactant>
    <interactant intactId="EBI-914727">
        <id>Q9UKT8</id>
        <label>FBXW2</label>
    </interactant>
    <organismsDiffer>false</organismsDiffer>
    <experiments>2</experiments>
</comment>
<comment type="interaction">
    <interactant intactId="EBI-357298">
        <id>Q9Y266</id>
    </interactant>
    <interactant intactId="EBI-25913156">
        <id>O14908-2</id>
        <label>GIPC1</label>
    </interactant>
    <organismsDiffer>false</organismsDiffer>
    <experiments>3</experiments>
</comment>
<comment type="interaction">
    <interactant intactId="EBI-357298">
        <id>Q9Y266</id>
    </interactant>
    <interactant intactId="EBI-2557132">
        <id>Q8NBT0</id>
        <label>POC1A</label>
    </interactant>
    <organismsDiffer>false</organismsDiffer>
    <experiments>3</experiments>
</comment>
<comment type="interaction">
    <interactant intactId="EBI-357298">
        <id>Q9Y266</id>
    </interactant>
    <interactant intactId="EBI-1176274">
        <id>Q8TC44</id>
        <label>POC1B</label>
    </interactant>
    <organismsDiffer>false</organismsDiffer>
    <experiments>5</experiments>
</comment>
<comment type="interaction">
    <interactant intactId="EBI-357298">
        <id>Q9Y266</id>
    </interactant>
    <interactant intactId="EBI-9478589">
        <id>Q96P53</id>
        <label>WDFY2</label>
    </interactant>
    <organismsDiffer>false</organismsDiffer>
    <experiments>2</experiments>
</comment>
<comment type="interaction">
    <interactant intactId="EBI-357298">
        <id>Q9Y266</id>
    </interactant>
    <interactant intactId="EBI-1054904">
        <id>Q9P2S5</id>
        <label>WRAP73</label>
    </interactant>
    <organismsDiffer>false</organismsDiffer>
    <experiments>2</experiments>
</comment>
<comment type="subcellular location">
    <subcellularLocation>
        <location>Cytoplasm</location>
        <location>Cytoskeleton</location>
    </subcellularLocation>
    <subcellularLocation>
        <location evidence="5">Nucleus</location>
    </subcellularLocation>
    <subcellularLocation>
        <location evidence="11">Cytoplasm</location>
        <location evidence="11">Cytoskeleton</location>
        <location evidence="11">Spindle</location>
    </subcellularLocation>
    <subcellularLocation>
        <location evidence="11">Midbody</location>
    </subcellularLocation>
    <text evidence="10 11">In a filamentous pattern adjacent to the nucleus of migrating cerebellar granule cells. Colocalizes with tubulin and dynein and with the microtubule organizing center. Distributed throughout the cytoplasm of non-migrating cells. A small proportion is nuclear, in a punctate pattern. Localizes to the mitotic spindle in a EML4-dependent manner (PubMed:25789526).</text>
</comment>
<comment type="tissue specificity">
    <text evidence="5 6">Ubiquitous. Highly expressed in fetal liver, kidney, lung and brain. Highly expressed in adult pancreas, kidney, skeletal muscle, liver, lung, placenta, prostate, brain and heart.</text>
</comment>
<comment type="induction">
    <text evidence="5">Up-regulated in actively dividing hematopoietic precursor cells. Up-regulated in cultured erythroleukemia TF-1 cells by granulocyte-macrophage colony-stimulating factor. Strongly down-regulated during maturation of erythroid precursor cells.</text>
</comment>
<comment type="PTM">
    <text evidence="8">Reversibly phosphorylated on serine residues during the M phase of the cell cycle. Phosphorylation on Ser-274 and Ser-326 is necessary for correct formation of mitotic spindles and chromosome separation during mitosis. Phosphorylated by PLK and other kinases.</text>
</comment>
<comment type="similarity">
    <text evidence="12">Belongs to the nudC family.</text>
</comment>
<comment type="sequence caution" evidence="12">
    <conflict type="frameshift">
        <sequence resource="EMBL-CDS" id="BAA76628"/>
    </conflict>
</comment>
<reference key="1">
    <citation type="journal article" date="1999" name="Exp. Hematol.">
        <title>A homolog of the fungal nuclear migration gene nudC is involved in normal and malignant human hematopoiesis.</title>
        <authorList>
            <person name="Miller B.A."/>
            <person name="Zhang M.-Y."/>
            <person name="Gocke C.D."/>
            <person name="De Souza C."/>
            <person name="Osmani A.H."/>
            <person name="Lynch C."/>
            <person name="Davies J."/>
            <person name="Bell L."/>
            <person name="Osmani S.A."/>
        </authorList>
    </citation>
    <scope>NUCLEOTIDE SEQUENCE [MRNA]</scope>
    <scope>INDUCTION</scope>
    <scope>SUBCELLULAR LOCATION</scope>
    <scope>TISSUE SPECIFICITY</scope>
    <source>
        <tissue>Heart</tissue>
    </source>
</reference>
<reference key="2">
    <citation type="journal article" date="1999" name="Hum. Genet.">
        <title>Molecular cloning and characterization of the human NUDC gene.</title>
        <authorList>
            <person name="Matsumoto N."/>
            <person name="Ledbetter D.H."/>
        </authorList>
    </citation>
    <scope>NUCLEOTIDE SEQUENCE [MRNA]</scope>
    <scope>TISSUE SPECIFICITY</scope>
</reference>
<reference key="3">
    <citation type="submission" date="1998-10" db="EMBL/GenBank/DDBJ databases">
        <title>Human MNUDC protein gene.</title>
        <authorList>
            <person name="Song H."/>
            <person name="Peng Y."/>
            <person name="Dai M."/>
            <person name="Huang Q."/>
            <person name="Mao Y."/>
            <person name="Zhang Q."/>
            <person name="Mao M."/>
            <person name="Fu G."/>
            <person name="Luo M."/>
            <person name="Chen J."/>
            <person name="Hu R."/>
        </authorList>
    </citation>
    <scope>NUCLEOTIDE SEQUENCE [MRNA]</scope>
    <source>
        <tissue>Pituitary</tissue>
    </source>
</reference>
<reference key="4">
    <citation type="submission" date="1998-11" db="EMBL/GenBank/DDBJ databases">
        <title>Unique genes expressed in fibroblasts of periodontal ligament.</title>
        <authorList>
            <person name="Yamamoto T."/>
            <person name="Takashiba S."/>
            <person name="Myokai F."/>
            <person name="Washio N."/>
            <person name="Nishimura F."/>
            <person name="Arai H."/>
            <person name="Murayama Y."/>
        </authorList>
    </citation>
    <scope>NUCLEOTIDE SEQUENCE [MRNA]</scope>
    <source>
        <tissue>Periodontal ligament</tissue>
    </source>
</reference>
<reference key="5">
    <citation type="submission" date="2003-07" db="EMBL/GenBank/DDBJ databases">
        <title>Cloning and characterization of a novel human cDNA homology to murine SIG-92 mRNA.</title>
        <authorList>
            <person name="Li N.G."/>
            <person name="Yu L."/>
            <person name="Tu Q."/>
            <person name="Fu Q."/>
            <person name="Wang X.K."/>
            <person name="Zhao S.Y."/>
        </authorList>
    </citation>
    <scope>NUCLEOTIDE SEQUENCE [MRNA]</scope>
</reference>
<reference key="6">
    <citation type="journal article" date="2001" name="Genome Res.">
        <title>Towards a catalog of human genes and proteins: sequencing and analysis of 500 novel complete protein coding human cDNAs.</title>
        <authorList>
            <person name="Wiemann S."/>
            <person name="Weil B."/>
            <person name="Wellenreuther R."/>
            <person name="Gassenhuber J."/>
            <person name="Glassl S."/>
            <person name="Ansorge W."/>
            <person name="Boecher M."/>
            <person name="Bloecker H."/>
            <person name="Bauersachs S."/>
            <person name="Blum H."/>
            <person name="Lauber J."/>
            <person name="Duesterhoeft A."/>
            <person name="Beyer A."/>
            <person name="Koehrer K."/>
            <person name="Strack N."/>
            <person name="Mewes H.-W."/>
            <person name="Ottenwaelder B."/>
            <person name="Obermaier B."/>
            <person name="Tampe J."/>
            <person name="Heubner D."/>
            <person name="Wambutt R."/>
            <person name="Korn B."/>
            <person name="Klein M."/>
            <person name="Poustka A."/>
        </authorList>
    </citation>
    <scope>NUCLEOTIDE SEQUENCE [LARGE SCALE MRNA]</scope>
    <source>
        <tissue>Kidney</tissue>
    </source>
</reference>
<reference key="7">
    <citation type="journal article" date="2006" name="Nature">
        <title>The DNA sequence and biological annotation of human chromosome 1.</title>
        <authorList>
            <person name="Gregory S.G."/>
            <person name="Barlow K.F."/>
            <person name="McLay K.E."/>
            <person name="Kaul R."/>
            <person name="Swarbreck D."/>
            <person name="Dunham A."/>
            <person name="Scott C.E."/>
            <person name="Howe K.L."/>
            <person name="Woodfine K."/>
            <person name="Spencer C.C.A."/>
            <person name="Jones M.C."/>
            <person name="Gillson C."/>
            <person name="Searle S."/>
            <person name="Zhou Y."/>
            <person name="Kokocinski F."/>
            <person name="McDonald L."/>
            <person name="Evans R."/>
            <person name="Phillips K."/>
            <person name="Atkinson A."/>
            <person name="Cooper R."/>
            <person name="Jones C."/>
            <person name="Hall R.E."/>
            <person name="Andrews T.D."/>
            <person name="Lloyd C."/>
            <person name="Ainscough R."/>
            <person name="Almeida J.P."/>
            <person name="Ambrose K.D."/>
            <person name="Anderson F."/>
            <person name="Andrew R.W."/>
            <person name="Ashwell R.I.S."/>
            <person name="Aubin K."/>
            <person name="Babbage A.K."/>
            <person name="Bagguley C.L."/>
            <person name="Bailey J."/>
            <person name="Beasley H."/>
            <person name="Bethel G."/>
            <person name="Bird C.P."/>
            <person name="Bray-Allen S."/>
            <person name="Brown J.Y."/>
            <person name="Brown A.J."/>
            <person name="Buckley D."/>
            <person name="Burton J."/>
            <person name="Bye J."/>
            <person name="Carder C."/>
            <person name="Chapman J.C."/>
            <person name="Clark S.Y."/>
            <person name="Clarke G."/>
            <person name="Clee C."/>
            <person name="Cobley V."/>
            <person name="Collier R.E."/>
            <person name="Corby N."/>
            <person name="Coville G.J."/>
            <person name="Davies J."/>
            <person name="Deadman R."/>
            <person name="Dunn M."/>
            <person name="Earthrowl M."/>
            <person name="Ellington A.G."/>
            <person name="Errington H."/>
            <person name="Frankish A."/>
            <person name="Frankland J."/>
            <person name="French L."/>
            <person name="Garner P."/>
            <person name="Garnett J."/>
            <person name="Gay L."/>
            <person name="Ghori M.R.J."/>
            <person name="Gibson R."/>
            <person name="Gilby L.M."/>
            <person name="Gillett W."/>
            <person name="Glithero R.J."/>
            <person name="Grafham D.V."/>
            <person name="Griffiths C."/>
            <person name="Griffiths-Jones S."/>
            <person name="Grocock R."/>
            <person name="Hammond S."/>
            <person name="Harrison E.S.I."/>
            <person name="Hart E."/>
            <person name="Haugen E."/>
            <person name="Heath P.D."/>
            <person name="Holmes S."/>
            <person name="Holt K."/>
            <person name="Howden P.J."/>
            <person name="Hunt A.R."/>
            <person name="Hunt S.E."/>
            <person name="Hunter G."/>
            <person name="Isherwood J."/>
            <person name="James R."/>
            <person name="Johnson C."/>
            <person name="Johnson D."/>
            <person name="Joy A."/>
            <person name="Kay M."/>
            <person name="Kershaw J.K."/>
            <person name="Kibukawa M."/>
            <person name="Kimberley A.M."/>
            <person name="King A."/>
            <person name="Knights A.J."/>
            <person name="Lad H."/>
            <person name="Laird G."/>
            <person name="Lawlor S."/>
            <person name="Leongamornlert D.A."/>
            <person name="Lloyd D.M."/>
            <person name="Loveland J."/>
            <person name="Lovell J."/>
            <person name="Lush M.J."/>
            <person name="Lyne R."/>
            <person name="Martin S."/>
            <person name="Mashreghi-Mohammadi M."/>
            <person name="Matthews L."/>
            <person name="Matthews N.S.W."/>
            <person name="McLaren S."/>
            <person name="Milne S."/>
            <person name="Mistry S."/>
            <person name="Moore M.J.F."/>
            <person name="Nickerson T."/>
            <person name="O'Dell C.N."/>
            <person name="Oliver K."/>
            <person name="Palmeiri A."/>
            <person name="Palmer S.A."/>
            <person name="Parker A."/>
            <person name="Patel D."/>
            <person name="Pearce A.V."/>
            <person name="Peck A.I."/>
            <person name="Pelan S."/>
            <person name="Phelps K."/>
            <person name="Phillimore B.J."/>
            <person name="Plumb R."/>
            <person name="Rajan J."/>
            <person name="Raymond C."/>
            <person name="Rouse G."/>
            <person name="Saenphimmachak C."/>
            <person name="Sehra H.K."/>
            <person name="Sheridan E."/>
            <person name="Shownkeen R."/>
            <person name="Sims S."/>
            <person name="Skuce C.D."/>
            <person name="Smith M."/>
            <person name="Steward C."/>
            <person name="Subramanian S."/>
            <person name="Sycamore N."/>
            <person name="Tracey A."/>
            <person name="Tromans A."/>
            <person name="Van Helmond Z."/>
            <person name="Wall M."/>
            <person name="Wallis J.M."/>
            <person name="White S."/>
            <person name="Whitehead S.L."/>
            <person name="Wilkinson J.E."/>
            <person name="Willey D.L."/>
            <person name="Williams H."/>
            <person name="Wilming L."/>
            <person name="Wray P.W."/>
            <person name="Wu Z."/>
            <person name="Coulson A."/>
            <person name="Vaudin M."/>
            <person name="Sulston J.E."/>
            <person name="Durbin R.M."/>
            <person name="Hubbard T."/>
            <person name="Wooster R."/>
            <person name="Dunham I."/>
            <person name="Carter N.P."/>
            <person name="McVean G."/>
            <person name="Ross M.T."/>
            <person name="Harrow J."/>
            <person name="Olson M.V."/>
            <person name="Beck S."/>
            <person name="Rogers J."/>
            <person name="Bentley D.R."/>
        </authorList>
    </citation>
    <scope>NUCLEOTIDE SEQUENCE [LARGE SCALE GENOMIC DNA]</scope>
</reference>
<reference key="8">
    <citation type="journal article" date="2004" name="Genome Res.">
        <title>The status, quality, and expansion of the NIH full-length cDNA project: the Mammalian Gene Collection (MGC).</title>
        <authorList>
            <consortium name="The MGC Project Team"/>
        </authorList>
    </citation>
    <scope>NUCLEOTIDE SEQUENCE [LARGE SCALE MRNA]</scope>
    <source>
        <tissue>Eye</tissue>
        <tissue>Kidney</tissue>
        <tissue>Lung</tissue>
        <tissue>Skin</tissue>
    </source>
</reference>
<reference key="9">
    <citation type="journal article" date="2003" name="Dev. Cell">
        <title>A role for Plk1 phosphorylation of NudC in cytokinesis.</title>
        <authorList>
            <person name="Zhou T."/>
            <person name="Aumais J.P."/>
            <person name="Liu X."/>
            <person name="Yu-Lee L.-Y."/>
            <person name="Erikson R.L."/>
        </authorList>
    </citation>
    <scope>FUNCTION</scope>
    <scope>INTERACTION WITH PLK1</scope>
    <scope>IDENTIFICATION IN A COMPLEX WITH DYNACTIN AND DYNEIN</scope>
    <scope>MUTAGENESIS OF SER-274 AND SER-326</scope>
    <scope>PHOSPHORYLATION AT SER-274 AND SER-326</scope>
</reference>
<reference key="10">
    <citation type="journal article" date="2003" name="J. Cell Sci.">
        <title>Role for NudC, a dynein-associated nuclear movement protein, in mitosis and cytokinesis.</title>
        <authorList>
            <person name="Aumais J.P."/>
            <person name="Williams S.N."/>
            <person name="Luo W."/>
            <person name="Nishino M."/>
            <person name="Caldwell K.A."/>
            <person name="Caldwell G.A."/>
            <person name="Lin S.-H."/>
            <person name="Yu-Lee L.-Y."/>
        </authorList>
    </citation>
    <scope>FUNCTION</scope>
    <scope>SUBCELLULAR LOCATION</scope>
</reference>
<reference key="11">
    <citation type="journal article" date="2006" name="Cell">
        <title>Global, in vivo, and site-specific phosphorylation dynamics in signaling networks.</title>
        <authorList>
            <person name="Olsen J.V."/>
            <person name="Blagoev B."/>
            <person name="Gnad F."/>
            <person name="Macek B."/>
            <person name="Kumar C."/>
            <person name="Mortensen P."/>
            <person name="Mann M."/>
        </authorList>
    </citation>
    <scope>PHOSPHORYLATION [LARGE SCALE ANALYSIS] AT SER-139 AND THR-145</scope>
    <scope>IDENTIFICATION BY MASS SPECTROMETRY [LARGE SCALE ANALYSIS]</scope>
    <source>
        <tissue>Cervix carcinoma</tissue>
    </source>
</reference>
<reference key="12">
    <citation type="journal article" date="2008" name="Proc. Natl. Acad. Sci. U.S.A.">
        <title>A quantitative atlas of mitotic phosphorylation.</title>
        <authorList>
            <person name="Dephoure N."/>
            <person name="Zhou C."/>
            <person name="Villen J."/>
            <person name="Beausoleil S.A."/>
            <person name="Bakalarski C.E."/>
            <person name="Elledge S.J."/>
            <person name="Gygi S.P."/>
        </authorList>
    </citation>
    <scope>PHOSPHORYLATION [LARGE SCALE ANALYSIS] AT SER-139 AND THR-145</scope>
    <scope>IDENTIFICATION BY MASS SPECTROMETRY [LARGE SCALE ANALYSIS]</scope>
    <source>
        <tissue>Cervix carcinoma</tissue>
    </source>
</reference>
<reference key="13">
    <citation type="journal article" date="2009" name="Anal. Chem.">
        <title>Lys-N and trypsin cover complementary parts of the phosphoproteome in a refined SCX-based approach.</title>
        <authorList>
            <person name="Gauci S."/>
            <person name="Helbig A.O."/>
            <person name="Slijper M."/>
            <person name="Krijgsveld J."/>
            <person name="Heck A.J."/>
            <person name="Mohammed S."/>
        </authorList>
    </citation>
    <scope>IDENTIFICATION BY MASS SPECTROMETRY [LARGE SCALE ANALYSIS]</scope>
</reference>
<reference key="14">
    <citation type="journal article" date="2009" name="Science">
        <title>Lysine acetylation targets protein complexes and co-regulates major cellular functions.</title>
        <authorList>
            <person name="Choudhary C."/>
            <person name="Kumar C."/>
            <person name="Gnad F."/>
            <person name="Nielsen M.L."/>
            <person name="Rehman M."/>
            <person name="Walther T.C."/>
            <person name="Olsen J.V."/>
            <person name="Mann M."/>
        </authorList>
    </citation>
    <scope>ACETYLATION [LARGE SCALE ANALYSIS] AT LYS-239</scope>
    <scope>IDENTIFICATION BY MASS SPECTROMETRY [LARGE SCALE ANALYSIS]</scope>
</reference>
<reference key="15">
    <citation type="journal article" date="2010" name="Sci. Signal.">
        <title>Quantitative phosphoproteomics reveals widespread full phosphorylation site occupancy during mitosis.</title>
        <authorList>
            <person name="Olsen J.V."/>
            <person name="Vermeulen M."/>
            <person name="Santamaria A."/>
            <person name="Kumar C."/>
            <person name="Miller M.L."/>
            <person name="Jensen L.J."/>
            <person name="Gnad F."/>
            <person name="Cox J."/>
            <person name="Jensen T.S."/>
            <person name="Nigg E.A."/>
            <person name="Brunak S."/>
            <person name="Mann M."/>
        </authorList>
    </citation>
    <scope>PHOSPHORYLATION [LARGE SCALE ANALYSIS] AT THR-108; SER-139 AND THR-145</scope>
    <scope>IDENTIFICATION BY MASS SPECTROMETRY [LARGE SCALE ANALYSIS]</scope>
    <source>
        <tissue>Cervix carcinoma</tissue>
    </source>
</reference>
<reference key="16">
    <citation type="journal article" date="2011" name="BMC Syst. Biol.">
        <title>Initial characterization of the human central proteome.</title>
        <authorList>
            <person name="Burkard T.R."/>
            <person name="Planyavsky M."/>
            <person name="Kaupe I."/>
            <person name="Breitwieser F.P."/>
            <person name="Buerckstuemmer T."/>
            <person name="Bennett K.L."/>
            <person name="Superti-Furga G."/>
            <person name="Colinge J."/>
        </authorList>
    </citation>
    <scope>IDENTIFICATION BY MASS SPECTROMETRY [LARGE SCALE ANALYSIS]</scope>
</reference>
<reference key="17">
    <citation type="journal article" date="2011" name="J. Cell Sci.">
        <title>Linking cytoplasmic dynein and transport of Rab8 vesicles to the midbody during cytokinesis by the doublecortin domain-containing 5 protein.</title>
        <authorList>
            <person name="Kaplan A."/>
            <person name="Reiner O."/>
        </authorList>
    </citation>
    <scope>INTERACTION WITH DCDC1</scope>
</reference>
<reference key="18">
    <citation type="journal article" date="2011" name="Sci. Signal.">
        <title>System-wide temporal characterization of the proteome and phosphoproteome of human embryonic stem cell differentiation.</title>
        <authorList>
            <person name="Rigbolt K.T."/>
            <person name="Prokhorova T.A."/>
            <person name="Akimov V."/>
            <person name="Henningsen J."/>
            <person name="Johansen P.T."/>
            <person name="Kratchmarova I."/>
            <person name="Kassem M."/>
            <person name="Mann M."/>
            <person name="Olsen J.V."/>
            <person name="Blagoev B."/>
        </authorList>
    </citation>
    <scope>PHOSPHORYLATION [LARGE SCALE ANALYSIS] AT SER-139</scope>
    <scope>IDENTIFICATION BY MASS SPECTROMETRY [LARGE SCALE ANALYSIS]</scope>
</reference>
<reference key="19">
    <citation type="journal article" date="2013" name="J. Proteome Res.">
        <title>Toward a comprehensive characterization of a human cancer cell phosphoproteome.</title>
        <authorList>
            <person name="Zhou H."/>
            <person name="Di Palma S."/>
            <person name="Preisinger C."/>
            <person name="Peng M."/>
            <person name="Polat A.N."/>
            <person name="Heck A.J."/>
            <person name="Mohammed S."/>
        </authorList>
    </citation>
    <scope>PHOSPHORYLATION [LARGE SCALE ANALYSIS] AT SER-60; THR-108; SER-136; SER-139; THR-145; SER-259; SER-260; SER-277; SER-285 AND SER-298</scope>
    <scope>IDENTIFICATION BY MASS SPECTROMETRY [LARGE SCALE ANALYSIS]</scope>
    <source>
        <tissue>Cervix carcinoma</tissue>
        <tissue>Erythroleukemia</tissue>
    </source>
</reference>
<reference key="20">
    <citation type="journal article" date="2014" name="J. Proteomics">
        <title>An enzyme assisted RP-RPLC approach for in-depth analysis of human liver phosphoproteome.</title>
        <authorList>
            <person name="Bian Y."/>
            <person name="Song C."/>
            <person name="Cheng K."/>
            <person name="Dong M."/>
            <person name="Wang F."/>
            <person name="Huang J."/>
            <person name="Sun D."/>
            <person name="Wang L."/>
            <person name="Ye M."/>
            <person name="Zou H."/>
        </authorList>
    </citation>
    <scope>IDENTIFICATION BY MASS SPECTROMETRY [LARGE SCALE ANALYSIS]</scope>
    <source>
        <tissue>Liver</tissue>
    </source>
</reference>
<reference key="21">
    <citation type="journal article" date="2015" name="Cell Cycle">
        <title>EML4 promotes the loading of NUDC to the spindle for mitotic progression.</title>
        <authorList>
            <person name="Chen D."/>
            <person name="Ito S."/>
            <person name="Yuan H."/>
            <person name="Hyodo T."/>
            <person name="Kadomatsu K."/>
            <person name="Hamaguchi M."/>
            <person name="Senga T."/>
        </authorList>
    </citation>
    <scope>FUNCTION</scope>
    <scope>SUBCELLULAR LOCATION</scope>
    <scope>INTERACTION WITH EML4</scope>
</reference>
<reference key="22">
    <citation type="journal article" date="2015" name="Proteomics">
        <title>N-terminome analysis of the human mitochondrial proteome.</title>
        <authorList>
            <person name="Vaca Jacome A.S."/>
            <person name="Rabilloud T."/>
            <person name="Schaeffer-Reiss C."/>
            <person name="Rompais M."/>
            <person name="Ayoub D."/>
            <person name="Lane L."/>
            <person name="Bairoch A."/>
            <person name="Van Dorsselaer A."/>
            <person name="Carapito C."/>
        </authorList>
    </citation>
    <scope>IDENTIFICATION BY MASS SPECTROMETRY [LARGE SCALE ANALYSIS]</scope>
</reference>
<gene>
    <name type="primary">NUDC</name>
</gene>
<sequence>MGGEQEEERFDGMLLAMAQQHEGGVQELVNTFFSFLRRKTDFFIGGEEGMAEKLITQTFSHHNQLAQKTRREKRARQEAERREKAERAARLAKEAKSETSGPQIKELTDEEAERLQLEIDQKKDAENHEAQLKNGSLDSPGKQDTEEDEEEDEKDKGKLKPNLGNGADLPNYRWTQTLSELDLAVPFCVNFRLKGKDMVVDIQRRHLRVGLKGQPAIIDGELYNEVKVEESSWLIEDGKVVTVHLEKINKMEWWSRLVSSDPEINTKKINPENSKLSDLDSETRSMVEKMMYDQRQKSMGLPTSDEQKKQEILKKFMDQHPEMDFSKAKFN</sequence>
<organism>
    <name type="scientific">Homo sapiens</name>
    <name type="common">Human</name>
    <dbReference type="NCBI Taxonomy" id="9606"/>
    <lineage>
        <taxon>Eukaryota</taxon>
        <taxon>Metazoa</taxon>
        <taxon>Chordata</taxon>
        <taxon>Craniata</taxon>
        <taxon>Vertebrata</taxon>
        <taxon>Euteleostomi</taxon>
        <taxon>Mammalia</taxon>
        <taxon>Eutheria</taxon>
        <taxon>Euarchontoglires</taxon>
        <taxon>Primates</taxon>
        <taxon>Haplorrhini</taxon>
        <taxon>Catarrhini</taxon>
        <taxon>Hominidae</taxon>
        <taxon>Homo</taxon>
    </lineage>
</organism>
<keyword id="KW-0002">3D-structure</keyword>
<keyword id="KW-0007">Acetylation</keyword>
<keyword id="KW-0131">Cell cycle</keyword>
<keyword id="KW-0132">Cell division</keyword>
<keyword id="KW-0175">Coiled coil</keyword>
<keyword id="KW-0963">Cytoplasm</keyword>
<keyword id="KW-0206">Cytoskeleton</keyword>
<keyword id="KW-0493">Microtubule</keyword>
<keyword id="KW-0498">Mitosis</keyword>
<keyword id="KW-0539">Nucleus</keyword>
<keyword id="KW-0597">Phosphoprotein</keyword>
<keyword id="KW-1267">Proteomics identification</keyword>
<keyword id="KW-1185">Reference proteome</keyword>
<proteinExistence type="evidence at protein level"/>
<evidence type="ECO:0000250" key="1">
    <source>
        <dbReference type="UniProtKB" id="O35685"/>
    </source>
</evidence>
<evidence type="ECO:0000255" key="2"/>
<evidence type="ECO:0000255" key="3">
    <source>
        <dbReference type="PROSITE-ProRule" id="PRU00547"/>
    </source>
</evidence>
<evidence type="ECO:0000256" key="4">
    <source>
        <dbReference type="SAM" id="MobiDB-lite"/>
    </source>
</evidence>
<evidence type="ECO:0000269" key="5">
    <source>
    </source>
</evidence>
<evidence type="ECO:0000269" key="6">
    <source>
    </source>
</evidence>
<evidence type="ECO:0000269" key="7">
    <source>
    </source>
</evidence>
<evidence type="ECO:0000269" key="8">
    <source>
    </source>
</evidence>
<evidence type="ECO:0000269" key="9">
    <source>
    </source>
</evidence>
<evidence type="ECO:0000269" key="10">
    <source>
    </source>
</evidence>
<evidence type="ECO:0000269" key="11">
    <source>
    </source>
</evidence>
<evidence type="ECO:0000305" key="12"/>
<evidence type="ECO:0007744" key="13">
    <source>
    </source>
</evidence>
<evidence type="ECO:0007744" key="14">
    <source>
    </source>
</evidence>
<evidence type="ECO:0007744" key="15">
    <source>
    </source>
</evidence>
<evidence type="ECO:0007744" key="16">
    <source>
    </source>
</evidence>
<evidence type="ECO:0007744" key="17">
    <source>
    </source>
</evidence>
<evidence type="ECO:0007744" key="18">
    <source>
    </source>
</evidence>
<evidence type="ECO:0007829" key="19">
    <source>
        <dbReference type="PDB" id="3QOR"/>
    </source>
</evidence>
<evidence type="ECO:0007829" key="20">
    <source>
        <dbReference type="PDB" id="7NDX"/>
    </source>
</evidence>
<protein>
    <recommendedName>
        <fullName>Nuclear migration protein nudC</fullName>
    </recommendedName>
    <alternativeName>
        <fullName>Nuclear distribution protein C homolog</fullName>
    </alternativeName>
</protein>
<feature type="chain" id="PRO_0000057990" description="Nuclear migration protein nudC">
    <location>
        <begin position="1"/>
        <end position="331"/>
    </location>
</feature>
<feature type="domain" description="CS" evidence="3">
    <location>
        <begin position="167"/>
        <end position="258"/>
    </location>
</feature>
<feature type="region of interest" description="Disordered" evidence="4">
    <location>
        <begin position="62"/>
        <end position="108"/>
    </location>
</feature>
<feature type="region of interest" description="Disordered" evidence="4">
    <location>
        <begin position="129"/>
        <end position="170"/>
    </location>
</feature>
<feature type="region of interest" description="Interaction with EML4" evidence="11">
    <location>
        <begin position="173"/>
        <end position="331"/>
    </location>
</feature>
<feature type="coiled-coil region" evidence="2">
    <location>
        <begin position="60"/>
        <end position="134"/>
    </location>
</feature>
<feature type="short sequence motif" description="Nuclear localization signal" evidence="2">
    <location>
        <begin position="68"/>
        <end position="74"/>
    </location>
</feature>
<feature type="compositionally biased region" description="Basic and acidic residues" evidence="4">
    <location>
        <begin position="75"/>
        <end position="97"/>
    </location>
</feature>
<feature type="modified residue" description="Phosphoserine" evidence="18">
    <location>
        <position position="60"/>
    </location>
</feature>
<feature type="modified residue" description="Phosphothreonine" evidence="16 18">
    <location>
        <position position="108"/>
    </location>
</feature>
<feature type="modified residue" description="Phosphoserine" evidence="18">
    <location>
        <position position="136"/>
    </location>
</feature>
<feature type="modified residue" description="Phosphoserine" evidence="13 14 16 17 18">
    <location>
        <position position="139"/>
    </location>
</feature>
<feature type="modified residue" description="Phosphothreonine" evidence="13 14 16 18">
    <location>
        <position position="145"/>
    </location>
</feature>
<feature type="modified residue" description="N6-acetyllysine" evidence="15">
    <location>
        <position position="239"/>
    </location>
</feature>
<feature type="modified residue" description="Phosphoserine" evidence="18">
    <location>
        <position position="259"/>
    </location>
</feature>
<feature type="modified residue" description="Phosphoserine" evidence="18">
    <location>
        <position position="260"/>
    </location>
</feature>
<feature type="modified residue" description="Phosphoserine; by PLK1" evidence="8">
    <location>
        <position position="274"/>
    </location>
</feature>
<feature type="modified residue" description="Phosphoserine" evidence="18">
    <location>
        <position position="277"/>
    </location>
</feature>
<feature type="modified residue" description="Phosphoserine" evidence="18">
    <location>
        <position position="285"/>
    </location>
</feature>
<feature type="modified residue" description="Phosphoserine" evidence="18">
    <location>
        <position position="298"/>
    </location>
</feature>
<feature type="modified residue" description="Phosphoserine; by PLK1" evidence="8">
    <location>
        <position position="326"/>
    </location>
</feature>
<feature type="mutagenesis site" description="Abolishes phosphorylation by PLK1; when associated with A-326." evidence="8">
    <original>S</original>
    <variation>A</variation>
    <location>
        <position position="274"/>
    </location>
</feature>
<feature type="mutagenesis site" description="Abolishes phosphorylation by PLK1; when associated with A-274." evidence="8">
    <original>S</original>
    <variation>A</variation>
    <location>
        <position position="326"/>
    </location>
</feature>
<feature type="sequence conflict" description="In Ref. 4; BAA76628." evidence="12" ref="4">
    <original>Q</original>
    <variation>H</variation>
    <location>
        <position position="19"/>
    </location>
</feature>
<feature type="sequence conflict" description="In Ref. 6; CAB66659." evidence="12" ref="6">
    <original>T</original>
    <variation>N</variation>
    <location>
        <position position="69"/>
    </location>
</feature>
<feature type="sequence conflict" description="In Ref. 4; BAA76628." evidence="12" ref="4">
    <original>R</original>
    <variation>I</variation>
    <location>
        <position position="74"/>
    </location>
</feature>
<feature type="sequence conflict" description="In Ref. 4; BAA76628." evidence="12" ref="4">
    <original>E</original>
    <variation>K</variation>
    <location>
        <position position="111"/>
    </location>
</feature>
<feature type="sequence conflict" description="In Ref. 4; BAA76628." evidence="12" ref="4">
    <original>R</original>
    <variation>K</variation>
    <location>
        <position position="114"/>
    </location>
</feature>
<feature type="sequence conflict" description="In Ref. 4; BAA76628." evidence="12" ref="4">
    <original>H</original>
    <variation>P</variation>
    <location>
        <position position="128"/>
    </location>
</feature>
<feature type="sequence conflict" description="In Ref. 6; CAB66659." evidence="12" ref="6">
    <original>E</original>
    <variation>V</variation>
    <location>
        <position position="149"/>
    </location>
</feature>
<feature type="sequence conflict" description="In Ref. 6; CAB66659." evidence="12" ref="6">
    <original>L</original>
    <variation>P</variation>
    <location>
        <position position="169"/>
    </location>
</feature>
<feature type="strand" evidence="20">
    <location>
        <begin position="105"/>
        <end position="107"/>
    </location>
</feature>
<feature type="helix" evidence="20">
    <location>
        <begin position="109"/>
        <end position="123"/>
    </location>
</feature>
<feature type="helix" evidence="20">
    <location>
        <begin position="125"/>
        <end position="127"/>
    </location>
</feature>
<feature type="strand" evidence="19">
    <location>
        <begin position="173"/>
        <end position="176"/>
    </location>
</feature>
<feature type="strand" evidence="19">
    <location>
        <begin position="178"/>
        <end position="186"/>
    </location>
</feature>
<feature type="helix" evidence="19">
    <location>
        <begin position="195"/>
        <end position="197"/>
    </location>
</feature>
<feature type="strand" evidence="19">
    <location>
        <begin position="198"/>
        <end position="203"/>
    </location>
</feature>
<feature type="strand" evidence="19">
    <location>
        <begin position="206"/>
        <end position="211"/>
    </location>
</feature>
<feature type="strand" evidence="19">
    <location>
        <begin position="217"/>
        <end position="224"/>
    </location>
</feature>
<feature type="helix" evidence="19">
    <location>
        <begin position="228"/>
        <end position="230"/>
    </location>
</feature>
<feature type="strand" evidence="19">
    <location>
        <begin position="232"/>
        <end position="236"/>
    </location>
</feature>
<feature type="turn" evidence="19">
    <location>
        <begin position="237"/>
        <end position="239"/>
    </location>
</feature>
<feature type="strand" evidence="19">
    <location>
        <begin position="240"/>
        <end position="251"/>
    </location>
</feature>
<feature type="helix" evidence="19">
    <location>
        <begin position="266"/>
        <end position="268"/>
    </location>
</feature>